<name>ECCA2_MYCTO</name>
<dbReference type="EMBL" id="AE000516">
    <property type="protein sequence ID" value="AAK48367.1"/>
    <property type="status" value="ALT_INIT"/>
    <property type="molecule type" value="Genomic_DNA"/>
</dbReference>
<dbReference type="PIR" id="E70597">
    <property type="entry name" value="E70597"/>
</dbReference>
<dbReference type="RefSeq" id="WP_003400005.1">
    <property type="nucleotide sequence ID" value="NZ_KK341228.1"/>
</dbReference>
<dbReference type="SMR" id="P9WPH6"/>
<dbReference type="KEGG" id="mtc:MT3999"/>
<dbReference type="PATRIC" id="fig|83331.31.peg.4303"/>
<dbReference type="HOGENOM" id="CLU_008749_5_0_11"/>
<dbReference type="Proteomes" id="UP000001020">
    <property type="component" value="Chromosome"/>
</dbReference>
<dbReference type="GO" id="GO:0005737">
    <property type="term" value="C:cytoplasm"/>
    <property type="evidence" value="ECO:0007669"/>
    <property type="project" value="UniProtKB-SubCell"/>
</dbReference>
<dbReference type="GO" id="GO:0005524">
    <property type="term" value="F:ATP binding"/>
    <property type="evidence" value="ECO:0007669"/>
    <property type="project" value="UniProtKB-KW"/>
</dbReference>
<dbReference type="GO" id="GO:0016887">
    <property type="term" value="F:ATP hydrolysis activity"/>
    <property type="evidence" value="ECO:0007669"/>
    <property type="project" value="InterPro"/>
</dbReference>
<dbReference type="CDD" id="cd00009">
    <property type="entry name" value="AAA"/>
    <property type="match status" value="1"/>
</dbReference>
<dbReference type="FunFam" id="1.10.8.60:FF:000203">
    <property type="entry name" value="ESX-2 secretion system protein EccA2"/>
    <property type="match status" value="1"/>
</dbReference>
<dbReference type="FunFam" id="3.40.50.300:FF:001778">
    <property type="entry name" value="Type VII secretion AAA-ATPase EccA"/>
    <property type="match status" value="1"/>
</dbReference>
<dbReference type="Gene3D" id="1.10.8.60">
    <property type="match status" value="1"/>
</dbReference>
<dbReference type="Gene3D" id="3.40.50.300">
    <property type="entry name" value="P-loop containing nucleotide triphosphate hydrolases"/>
    <property type="match status" value="1"/>
</dbReference>
<dbReference type="Gene3D" id="1.25.40.10">
    <property type="entry name" value="Tetratricopeptide repeat domain"/>
    <property type="match status" value="1"/>
</dbReference>
<dbReference type="InterPro" id="IPR003593">
    <property type="entry name" value="AAA+_ATPase"/>
</dbReference>
<dbReference type="InterPro" id="IPR041627">
    <property type="entry name" value="AAA_lid_6"/>
</dbReference>
<dbReference type="InterPro" id="IPR003959">
    <property type="entry name" value="ATPase_AAA_core"/>
</dbReference>
<dbReference type="InterPro" id="IPR000641">
    <property type="entry name" value="CbxX/CfxQ"/>
</dbReference>
<dbReference type="InterPro" id="IPR050773">
    <property type="entry name" value="CbxX/CfxQ_RuBisCO_ESX"/>
</dbReference>
<dbReference type="InterPro" id="IPR027417">
    <property type="entry name" value="P-loop_NTPase"/>
</dbReference>
<dbReference type="InterPro" id="IPR023835">
    <property type="entry name" value="T7SS_EccA"/>
</dbReference>
<dbReference type="InterPro" id="IPR049078">
    <property type="entry name" value="T7SS_EccA1-like_N"/>
</dbReference>
<dbReference type="InterPro" id="IPR011990">
    <property type="entry name" value="TPR-like_helical_dom_sf"/>
</dbReference>
<dbReference type="NCBIfam" id="TIGR03922">
    <property type="entry name" value="T7SS_EccA"/>
    <property type="match status" value="1"/>
</dbReference>
<dbReference type="PANTHER" id="PTHR43392">
    <property type="entry name" value="AAA-TYPE ATPASE FAMILY PROTEIN / ANKYRIN REPEAT FAMILY PROTEIN"/>
    <property type="match status" value="1"/>
</dbReference>
<dbReference type="PANTHER" id="PTHR43392:SF2">
    <property type="entry name" value="AAA-TYPE ATPASE FAMILY PROTEIN _ ANKYRIN REPEAT FAMILY PROTEIN"/>
    <property type="match status" value="1"/>
</dbReference>
<dbReference type="Pfam" id="PF00004">
    <property type="entry name" value="AAA"/>
    <property type="match status" value="1"/>
</dbReference>
<dbReference type="Pfam" id="PF17866">
    <property type="entry name" value="AAA_lid_6"/>
    <property type="match status" value="1"/>
</dbReference>
<dbReference type="Pfam" id="PF21545">
    <property type="entry name" value="T7SS_EccA1_N"/>
    <property type="match status" value="2"/>
</dbReference>
<dbReference type="PRINTS" id="PR00819">
    <property type="entry name" value="CBXCFQXSUPER"/>
</dbReference>
<dbReference type="SMART" id="SM00382">
    <property type="entry name" value="AAA"/>
    <property type="match status" value="1"/>
</dbReference>
<dbReference type="SUPFAM" id="SSF52540">
    <property type="entry name" value="P-loop containing nucleoside triphosphate hydrolases"/>
    <property type="match status" value="1"/>
</dbReference>
<keyword id="KW-0067">ATP-binding</keyword>
<keyword id="KW-0963">Cytoplasm</keyword>
<keyword id="KW-0547">Nucleotide-binding</keyword>
<keyword id="KW-1185">Reference proteome</keyword>
<feature type="chain" id="PRO_0000426950" description="ESX-2 secretion system protein EccA2">
    <location>
        <begin position="1"/>
        <end position="619"/>
    </location>
</feature>
<feature type="binding site" evidence="2">
    <location>
        <begin position="373"/>
        <end position="380"/>
    </location>
    <ligand>
        <name>ATP</name>
        <dbReference type="ChEBI" id="CHEBI:30616"/>
    </ligand>
</feature>
<accession>P9WPH6</accession>
<accession>L0TDU9</accession>
<accession>O05460</accession>
<protein>
    <recommendedName>
        <fullName>ESX-2 secretion system protein EccA2</fullName>
    </recommendedName>
    <alternativeName>
        <fullName>ESX conserved component A2</fullName>
    </alternativeName>
    <alternativeName>
        <fullName>Type VII secretion system protein EccA2</fullName>
        <shortName>T7SS protein EccA2</shortName>
    </alternativeName>
</protein>
<gene>
    <name type="primary">eccA2</name>
    <name type="ordered locus">MT3999</name>
</gene>
<organism>
    <name type="scientific">Mycobacterium tuberculosis (strain CDC 1551 / Oshkosh)</name>
    <dbReference type="NCBI Taxonomy" id="83331"/>
    <lineage>
        <taxon>Bacteria</taxon>
        <taxon>Bacillati</taxon>
        <taxon>Actinomycetota</taxon>
        <taxon>Actinomycetes</taxon>
        <taxon>Mycobacteriales</taxon>
        <taxon>Mycobacteriaceae</taxon>
        <taxon>Mycobacterium</taxon>
        <taxon>Mycobacterium tuberculosis complex</taxon>
    </lineage>
</organism>
<sequence>MSRMVDTMGDLLTARRHFDRAMTIKNGQGCVAALPEFVAATEADPSMADAWLGRIACGDRDLASLKQLNAHSEWLHRETTRIGRTLAAEVQLGPSIGITVTDASQVGLALSSALTIAGEYAKADALLANRELLDSWRNYQWHQLARAFLMYVTQRWPDVLSTAAEDLPPQAIVMPAVTASICALAAHAAAHLGQGRVALDWLDRVDVIGHSRSSGRFGADVLTAAIGPADIPLLVADLAYVRGMVYRQLHEEDKAQIWLSKATINGVLTDAAKEALADPNLRLIVTDERTIASRSDRWDASTAKSRDQLDDDNAAQRRGELLAEGRELLAKQVGLAAVKQAVSALEDQLEVRMMRLEHGLPVEGQTNHMLLVGPPGTGKTTTAEALGKIYAGMGIVRHPEIREVRRSDFCGHYIGESGPKTNELIEKSLGRIIFMDEFYSLIERHQDGTPDMIGMEAVNQLLVQLETHRFDFCFIGAGYEDQVDEFLTVNPGLAGRFNRKLRFESYSPVEIVEIGHRYATPRASQLDDAAREVFLDAVTTIRNYTTPSGQHGIDAMQNGRFARNVIERAEGFRDTRVVAQKRAGQPVSVQDLQIITATDIDAAIRSVCSDNRDMAAIVW</sequence>
<proteinExistence type="inferred from homology"/>
<comment type="function">
    <text evidence="1">Shows ATPase activity. Could provide energy for export of ESX-2 substrates (By similarity).</text>
</comment>
<comment type="subunit">
    <text evidence="1">Part of the ESX-2 / type VII secretion system (T7SS), which is composed of cytosolic and membrane components.</text>
</comment>
<comment type="subcellular location">
    <subcellularLocation>
        <location evidence="3">Cytoplasm</location>
    </subcellularLocation>
</comment>
<comment type="similarity">
    <text evidence="3">Belongs to the CbxX/CfxQ family.</text>
</comment>
<comment type="sequence caution" evidence="3">
    <conflict type="erroneous initiation">
        <sequence resource="EMBL-CDS" id="AAK48367"/>
    </conflict>
    <text>Extended N-terminus.</text>
</comment>
<evidence type="ECO:0000250" key="1"/>
<evidence type="ECO:0000255" key="2"/>
<evidence type="ECO:0000305" key="3"/>
<reference key="1">
    <citation type="journal article" date="2002" name="J. Bacteriol.">
        <title>Whole-genome comparison of Mycobacterium tuberculosis clinical and laboratory strains.</title>
        <authorList>
            <person name="Fleischmann R.D."/>
            <person name="Alland D."/>
            <person name="Eisen J.A."/>
            <person name="Carpenter L."/>
            <person name="White O."/>
            <person name="Peterson J.D."/>
            <person name="DeBoy R.T."/>
            <person name="Dodson R.J."/>
            <person name="Gwinn M.L."/>
            <person name="Haft D.H."/>
            <person name="Hickey E.K."/>
            <person name="Kolonay J.F."/>
            <person name="Nelson W.C."/>
            <person name="Umayam L.A."/>
            <person name="Ermolaeva M.D."/>
            <person name="Salzberg S.L."/>
            <person name="Delcher A."/>
            <person name="Utterback T.R."/>
            <person name="Weidman J.F."/>
            <person name="Khouri H.M."/>
            <person name="Gill J."/>
            <person name="Mikula A."/>
            <person name="Bishai W."/>
            <person name="Jacobs W.R. Jr."/>
            <person name="Venter J.C."/>
            <person name="Fraser C.M."/>
        </authorList>
    </citation>
    <scope>NUCLEOTIDE SEQUENCE [LARGE SCALE GENOMIC DNA]</scope>
    <source>
        <strain>CDC 1551 / Oshkosh</strain>
    </source>
</reference>